<sequence>MSHELTLQELAEFSANFNADPKNQVIARAAARSGVLEASYNERVAGRLTRVFSTELPTDNVTNQKQSGRCWLFSTLNVLRHDFGAKHKAKNFTLSQSYNFFWDKLERANLFYEKVIETADKPLDDREVRSYFDFAGHDGGQWHMAISLVKKYGVVPSYVMPESFNTSATNGLASALADKERKDALALRRLAQAGDQEGLEKARKTFLNEIYRMVAIAVGEPPKTFDLEYRDDDKNYHLEKNLTPVSFFNKYFDVDLDDYVVLTNAPDHEYGKLYHLGAEDNVEGGSPILFLNVPMEYLEQTAVAQLKDGEAVWFGNDVLRQMDRKTGYLDTDLYKLEDLFDVDLSLSKADRLATGAGEVSHAMTLVGVDEDKGDIRQWKVENSWGDKSGEKGFFVMSHNWFKEYVYEVVVHKKYLTKDQQELLSSTPVELAPWDSLA</sequence>
<gene>
    <name type="primary">pepG</name>
</gene>
<comment type="subcellular location">
    <subcellularLocation>
        <location evidence="4">Cytoplasm</location>
    </subcellularLocation>
</comment>
<comment type="similarity">
    <text evidence="2 3">Belongs to the peptidase C1 family.</text>
</comment>
<name>PEPG_LACDL</name>
<feature type="chain" id="PRO_0000050597" description="Aminopeptidase G">
    <location>
        <begin position="1"/>
        <end position="437"/>
    </location>
</feature>
<feature type="active site" evidence="1">
    <location>
        <position position="70"/>
    </location>
</feature>
<feature type="active site" evidence="1">
    <location>
        <position position="361"/>
    </location>
</feature>
<feature type="active site" evidence="1">
    <location>
        <position position="382"/>
    </location>
</feature>
<accession>P94869</accession>
<keyword id="KW-0031">Aminopeptidase</keyword>
<keyword id="KW-0963">Cytoplasm</keyword>
<keyword id="KW-0378">Hydrolase</keyword>
<keyword id="KW-0645">Protease</keyword>
<keyword id="KW-0788">Thiol protease</keyword>
<proteinExistence type="inferred from homology"/>
<protein>
    <recommendedName>
        <fullName>Aminopeptidase G</fullName>
        <ecNumber>3.4.22.-</ecNumber>
    </recommendedName>
</protein>
<organism>
    <name type="scientific">Lactobacillus delbrueckii subsp. lactis</name>
    <dbReference type="NCBI Taxonomy" id="29397"/>
    <lineage>
        <taxon>Bacteria</taxon>
        <taxon>Bacillati</taxon>
        <taxon>Bacillota</taxon>
        <taxon>Bacilli</taxon>
        <taxon>Lactobacillales</taxon>
        <taxon>Lactobacillaceae</taxon>
        <taxon>Lactobacillus</taxon>
    </lineage>
</organism>
<reference key="1">
    <citation type="journal article" date="1997" name="Microbiology">
        <title>Lactobacillus delbrueckii subsp. lactis DSM7290 pepG gene encodes a novel cysteine aminopeptidase.</title>
        <authorList>
            <person name="Klein J.R."/>
            <person name="Schick J."/>
            <person name="Henrich B."/>
            <person name="Plapp R."/>
        </authorList>
    </citation>
    <scope>NUCLEOTIDE SEQUENCE [GENOMIC DNA]</scope>
    <source>
        <strain>DSM 7290</strain>
    </source>
</reference>
<evidence type="ECO:0000250" key="1"/>
<evidence type="ECO:0000255" key="2">
    <source>
        <dbReference type="PROSITE-ProRule" id="PRU10088"/>
    </source>
</evidence>
<evidence type="ECO:0000255" key="3">
    <source>
        <dbReference type="PROSITE-ProRule" id="PRU10089"/>
    </source>
</evidence>
<evidence type="ECO:0000305" key="4"/>
<dbReference type="EC" id="3.4.22.-"/>
<dbReference type="EMBL" id="Z71782">
    <property type="protein sequence ID" value="CAA96465.1"/>
    <property type="molecule type" value="Genomic_DNA"/>
</dbReference>
<dbReference type="SMR" id="P94869"/>
<dbReference type="MEROPS" id="C01.089"/>
<dbReference type="GO" id="GO:0005737">
    <property type="term" value="C:cytoplasm"/>
    <property type="evidence" value="ECO:0007669"/>
    <property type="project" value="UniProtKB-SubCell"/>
</dbReference>
<dbReference type="GO" id="GO:0070005">
    <property type="term" value="F:cysteine-type aminopeptidase activity"/>
    <property type="evidence" value="ECO:0007669"/>
    <property type="project" value="InterPro"/>
</dbReference>
<dbReference type="GO" id="GO:0043418">
    <property type="term" value="P:homocysteine catabolic process"/>
    <property type="evidence" value="ECO:0007669"/>
    <property type="project" value="TreeGrafter"/>
</dbReference>
<dbReference type="GO" id="GO:0006508">
    <property type="term" value="P:proteolysis"/>
    <property type="evidence" value="ECO:0007669"/>
    <property type="project" value="UniProtKB-KW"/>
</dbReference>
<dbReference type="GO" id="GO:0009636">
    <property type="term" value="P:response to toxic substance"/>
    <property type="evidence" value="ECO:0007669"/>
    <property type="project" value="TreeGrafter"/>
</dbReference>
<dbReference type="CDD" id="cd00585">
    <property type="entry name" value="Peptidase_C1B"/>
    <property type="match status" value="1"/>
</dbReference>
<dbReference type="Gene3D" id="3.90.70.10">
    <property type="entry name" value="Cysteine proteinases"/>
    <property type="match status" value="1"/>
</dbReference>
<dbReference type="InterPro" id="IPR038765">
    <property type="entry name" value="Papain-like_cys_pep_sf"/>
</dbReference>
<dbReference type="InterPro" id="IPR000169">
    <property type="entry name" value="Pept_cys_AS"/>
</dbReference>
<dbReference type="InterPro" id="IPR025660">
    <property type="entry name" value="Pept_his_AS"/>
</dbReference>
<dbReference type="InterPro" id="IPR004134">
    <property type="entry name" value="Peptidase_C1B"/>
</dbReference>
<dbReference type="PANTHER" id="PTHR10363">
    <property type="entry name" value="BLEOMYCIN HYDROLASE"/>
    <property type="match status" value="1"/>
</dbReference>
<dbReference type="PANTHER" id="PTHR10363:SF2">
    <property type="entry name" value="BLEOMYCIN HYDROLASE"/>
    <property type="match status" value="1"/>
</dbReference>
<dbReference type="Pfam" id="PF03051">
    <property type="entry name" value="Peptidase_C1_2"/>
    <property type="match status" value="1"/>
</dbReference>
<dbReference type="PIRSF" id="PIRSF005700">
    <property type="entry name" value="PepC"/>
    <property type="match status" value="1"/>
</dbReference>
<dbReference type="SUPFAM" id="SSF54001">
    <property type="entry name" value="Cysteine proteinases"/>
    <property type="match status" value="1"/>
</dbReference>
<dbReference type="PROSITE" id="PS00139">
    <property type="entry name" value="THIOL_PROTEASE_CYS"/>
    <property type="match status" value="1"/>
</dbReference>
<dbReference type="PROSITE" id="PS00639">
    <property type="entry name" value="THIOL_PROTEASE_HIS"/>
    <property type="match status" value="1"/>
</dbReference>